<keyword id="KW-0158">Chromosome</keyword>
<keyword id="KW-0175">Coiled coil</keyword>
<keyword id="KW-0227">DNA damage</keyword>
<keyword id="KW-0234">DNA repair</keyword>
<keyword id="KW-0235">DNA replication</keyword>
<keyword id="KW-0539">Nucleus</keyword>
<keyword id="KW-1185">Reference proteome</keyword>
<keyword id="KW-0804">Transcription</keyword>
<keyword id="KW-0805">Transcription regulation</keyword>
<proteinExistence type="evidence at transcript level"/>
<accession>Q8H6B1</accession>
<name>SPT16_MAIZE</name>
<sequence length="1055" mass="118504">MADNGDAKGGSGAYAINIENFSKRLKVFYDHWKEHKSDLWGSSDAIAIATPPPSDDLRYLKSSALDIWLLGYEFPETIIVFMHKQIHVLSSQKKGNLIGTLKKAANEAVGVDIVLHVKTKNSDGADLMDDIVHAARNQSKSDKPVVGHIAKEAPEGKLLETWIKKLSGSGLRLVDVTNGFSELFAVKDTTEITCVKKAAYLTSSVLKNFVIPKLEKVIDEEKEVSHSSLMDDAEKAILDPLKVKVKLKPDNVDICYPPVFQSGGKFDLKPGASSNDEYLYYDSASIIICAIGSKYSSYCSNVARTYLIDATPTQNKAYETLRKAHEAAIQQVKPGNQMSAVYQAAVAVIERDAPELLPNLTKSAGTGIGLEFRESGLNLNAKNDRRIKKGMVFNVSLGLHNIQAETTSEKTKQFSLLLADTVLVNERGHEILTAPCSKAFKDVAYSFNEDDDAVAAEVKIKSKTIDVMPTKATLRSDNQEMSKEELRRQHQAELARQKNEETARRLAGVGTGSGDGRGPARASNELVAYKNVNDVPFVRDLVIQVDQKNEAVLLPIYGSMVPFHVSTVKSVTSHQDNRTCTIRIFFNVPGMPFSNDSKFNSQGAIYLKEITFRSKDPRHSSEVVQQIKTLRRQVASRESERAERATLVTQEKLQIGSNRMKMMRLSDVWIRPAFGGRGRKLTGNLEAHFNGFRYSTSRSDERVDIMFGNIKHAFFQPAEKEMITLLHFHLHNHIMVGNKKTKDVQFYVEVMDVVQTLGGSRRSALDPDEIEEEQRERDRKNRINMDFQNFVNKVNDHWSQPQFKGLDLEFDVPLRELGFHGVPYKASAFIIPTSTCLVELIETPFLVVSLSEIEIVNLERVGFGTKNFDMAIVFKDFKKDVLRIDSIPSASLDAIKEWLDTTDLKYYESRLNLNWRPILKTIIDDPQKFIDDGGWEFLNMEASDSETEDTEESDQGYVPSDAEPESESEDDDSDSESLVESDDDDEESDEDSEEEKGKTWEELEREASNADREHGAESDSEEERRRRKAKTFGKSRAPERSSFKGAPPSKKPKFR</sequence>
<organism>
    <name type="scientific">Zea mays</name>
    <name type="common">Maize</name>
    <dbReference type="NCBI Taxonomy" id="4577"/>
    <lineage>
        <taxon>Eukaryota</taxon>
        <taxon>Viridiplantae</taxon>
        <taxon>Streptophyta</taxon>
        <taxon>Embryophyta</taxon>
        <taxon>Tracheophyta</taxon>
        <taxon>Spermatophyta</taxon>
        <taxon>Magnoliopsida</taxon>
        <taxon>Liliopsida</taxon>
        <taxon>Poales</taxon>
        <taxon>Poaceae</taxon>
        <taxon>PACMAD clade</taxon>
        <taxon>Panicoideae</taxon>
        <taxon>Andropogonodae</taxon>
        <taxon>Andropogoneae</taxon>
        <taxon>Tripsacinae</taxon>
        <taxon>Zea</taxon>
    </lineage>
</organism>
<protein>
    <recommendedName>
        <fullName>FACT complex subunit SPT16</fullName>
    </recommendedName>
    <alternativeName>
        <fullName>Facilitates chromatin transcription complex subunit SPT16</fullName>
    </alternativeName>
    <alternativeName>
        <fullName>Global transcription factor group C protein 102</fullName>
    </alternativeName>
</protein>
<evidence type="ECO:0000250" key="1"/>
<evidence type="ECO:0000255" key="2"/>
<evidence type="ECO:0000256" key="3">
    <source>
        <dbReference type="SAM" id="MobiDB-lite"/>
    </source>
</evidence>
<evidence type="ECO:0000305" key="4"/>
<reference key="1">
    <citation type="submission" date="2002-11" db="EMBL/GenBank/DDBJ databases">
        <title>Sequences from the plant chromatin consortium.</title>
        <authorList>
            <person name="Bergstrom D."/>
            <person name="Springer N.M."/>
            <person name="Schmitt L.T."/>
            <person name="Guthrie E."/>
            <person name="Sidorenko L."/>
            <person name="Kaeppler S.M."/>
            <person name="Cone K.C."/>
        </authorList>
    </citation>
    <scope>NUCLEOTIDE SEQUENCE [MRNA]</scope>
</reference>
<comment type="function">
    <text evidence="1">Component of the FACT complex, a general chromatin factor that acts to reorganize nucleosomes. The FACT complex is involved in multiple processes that require DNA as a template such as mRNA elongation, DNA replication and DNA repair. During transcription elongation the FACT complex acts as a histone chaperone that both destabilizes and restores nucleosomal structure. It facilitates the passage of RNA polymerase II and transcription by promoting the dissociation of one histone H2A-H2B dimer from the nucleosome, then subsequently promotes the reestablishment of the nucleosome following the passage of RNA polymerase II. SSRP1 binds specifically to double-stranded DNA (By similarity).</text>
</comment>
<comment type="subunit">
    <text evidence="1">Component of the FACT complex, a stable heterodimer of SPT16 and SSRP.</text>
</comment>
<comment type="subcellular location">
    <subcellularLocation>
        <location evidence="1">Nucleus</location>
    </subcellularLocation>
    <subcellularLocation>
        <location evidence="1">Chromosome</location>
    </subcellularLocation>
</comment>
<comment type="similarity">
    <text evidence="4">Belongs to the peptidase M24 family. SPT16 subfamily.</text>
</comment>
<comment type="caution">
    <text evidence="4">Although related to the peptidase M24 family, this protein lacks conserved active site residues suggesting that it may lack peptidase activity.</text>
</comment>
<feature type="chain" id="PRO_0000245176" description="FACT complex subunit SPT16">
    <location>
        <begin position="1"/>
        <end position="1055"/>
    </location>
</feature>
<feature type="region of interest" description="Disordered" evidence="3">
    <location>
        <begin position="492"/>
        <end position="519"/>
    </location>
</feature>
<feature type="region of interest" description="Disordered" evidence="3">
    <location>
        <begin position="942"/>
        <end position="1055"/>
    </location>
</feature>
<feature type="coiled-coil region" evidence="2">
    <location>
        <begin position="313"/>
        <end position="333"/>
    </location>
</feature>
<feature type="coiled-coil region" evidence="2">
    <location>
        <begin position="480"/>
        <end position="503"/>
    </location>
</feature>
<feature type="coiled-coil region" evidence="2">
    <location>
        <begin position="768"/>
        <end position="789"/>
    </location>
</feature>
<feature type="compositionally biased region" description="Basic and acidic residues" evidence="3">
    <location>
        <begin position="492"/>
        <end position="504"/>
    </location>
</feature>
<feature type="compositionally biased region" description="Acidic residues" evidence="3">
    <location>
        <begin position="943"/>
        <end position="954"/>
    </location>
</feature>
<feature type="compositionally biased region" description="Acidic residues" evidence="3">
    <location>
        <begin position="962"/>
        <end position="994"/>
    </location>
</feature>
<feature type="compositionally biased region" description="Basic and acidic residues" evidence="3">
    <location>
        <begin position="995"/>
        <end position="1017"/>
    </location>
</feature>
<dbReference type="EMBL" id="AF545812">
    <property type="protein sequence ID" value="AAN41252.1"/>
    <property type="molecule type" value="mRNA"/>
</dbReference>
<dbReference type="RefSeq" id="NP_001105557.1">
    <property type="nucleotide sequence ID" value="NM_001112087.2"/>
</dbReference>
<dbReference type="SMR" id="Q8H6B1"/>
<dbReference type="FunCoup" id="Q8H6B1">
    <property type="interactions" value="3972"/>
</dbReference>
<dbReference type="STRING" id="4577.Q8H6B1"/>
<dbReference type="PaxDb" id="4577-GRMZM5G806358_P02"/>
<dbReference type="EnsemblPlants" id="Zm00001eb229990_T001">
    <property type="protein sequence ID" value="Zm00001eb229990_P001"/>
    <property type="gene ID" value="Zm00001eb229990"/>
</dbReference>
<dbReference type="Gramene" id="Zm00001eb229990_T001">
    <property type="protein sequence ID" value="Zm00001eb229990_P001"/>
    <property type="gene ID" value="Zm00001eb229990"/>
</dbReference>
<dbReference type="MaizeGDB" id="887762"/>
<dbReference type="eggNOG" id="KOG1189">
    <property type="taxonomic scope" value="Eukaryota"/>
</dbReference>
<dbReference type="HOGENOM" id="CLU_004627_1_0_1"/>
<dbReference type="InParanoid" id="Q8H6B1"/>
<dbReference type="OrthoDB" id="10251642at2759"/>
<dbReference type="Proteomes" id="UP000007305">
    <property type="component" value="Chromosome 5"/>
</dbReference>
<dbReference type="ExpressionAtlas" id="Q8H6B1">
    <property type="expression patterns" value="baseline and differential"/>
</dbReference>
<dbReference type="GO" id="GO:0035101">
    <property type="term" value="C:FACT complex"/>
    <property type="evidence" value="ECO:0000318"/>
    <property type="project" value="GO_Central"/>
</dbReference>
<dbReference type="GO" id="GO:0031491">
    <property type="term" value="F:nucleosome binding"/>
    <property type="evidence" value="ECO:0000318"/>
    <property type="project" value="GO_Central"/>
</dbReference>
<dbReference type="GO" id="GO:0006281">
    <property type="term" value="P:DNA repair"/>
    <property type="evidence" value="ECO:0007669"/>
    <property type="project" value="UniProtKB-KW"/>
</dbReference>
<dbReference type="GO" id="GO:0006260">
    <property type="term" value="P:DNA replication"/>
    <property type="evidence" value="ECO:0007669"/>
    <property type="project" value="UniProtKB-KW"/>
</dbReference>
<dbReference type="GO" id="GO:0006368">
    <property type="term" value="P:transcription elongation by RNA polymerase II"/>
    <property type="evidence" value="ECO:0000318"/>
    <property type="project" value="GO_Central"/>
</dbReference>
<dbReference type="CDD" id="cd01091">
    <property type="entry name" value="CDC68-like"/>
    <property type="match status" value="1"/>
</dbReference>
<dbReference type="FunFam" id="2.30.29.150:FF:000004">
    <property type="entry name" value="FACT complex subunit SPT16"/>
    <property type="match status" value="1"/>
</dbReference>
<dbReference type="FunFam" id="2.30.29.210:FF:000002">
    <property type="entry name" value="FACT complex subunit SPT16"/>
    <property type="match status" value="1"/>
</dbReference>
<dbReference type="FunFam" id="2.30.29.30:FF:000017">
    <property type="entry name" value="FACT complex subunit SPT16"/>
    <property type="match status" value="1"/>
</dbReference>
<dbReference type="FunFam" id="3.40.350.10:FF:000006">
    <property type="entry name" value="FACT complex subunit SPT16"/>
    <property type="match status" value="1"/>
</dbReference>
<dbReference type="FunFam" id="3.90.230.10:FF:000005">
    <property type="entry name" value="FACT complex subunit spt16"/>
    <property type="match status" value="1"/>
</dbReference>
<dbReference type="Gene3D" id="2.30.29.150">
    <property type="match status" value="1"/>
</dbReference>
<dbReference type="Gene3D" id="3.90.230.10">
    <property type="entry name" value="Creatinase/methionine aminopeptidase superfamily"/>
    <property type="match status" value="1"/>
</dbReference>
<dbReference type="Gene3D" id="3.40.350.10">
    <property type="entry name" value="Creatinase/prolidase N-terminal domain"/>
    <property type="match status" value="1"/>
</dbReference>
<dbReference type="Gene3D" id="2.30.29.210">
    <property type="entry name" value="FACT complex subunit Spt16p/Cdc68p"/>
    <property type="match status" value="1"/>
</dbReference>
<dbReference type="Gene3D" id="2.30.29.30">
    <property type="entry name" value="Pleckstrin-homology domain (PH domain)/Phosphotyrosine-binding domain (PTB)"/>
    <property type="match status" value="1"/>
</dbReference>
<dbReference type="InterPro" id="IPR029149">
    <property type="entry name" value="Creatin/AminoP/Spt16_N"/>
</dbReference>
<dbReference type="InterPro" id="IPR036005">
    <property type="entry name" value="Creatinase/aminopeptidase-like"/>
</dbReference>
<dbReference type="InterPro" id="IPR029148">
    <property type="entry name" value="FACT-SPT16_Nlobe"/>
</dbReference>
<dbReference type="InterPro" id="IPR056595">
    <property type="entry name" value="Fact-SPT16_PH"/>
</dbReference>
<dbReference type="InterPro" id="IPR048969">
    <property type="entry name" value="FACT_SPT16_C"/>
</dbReference>
<dbReference type="InterPro" id="IPR013953">
    <property type="entry name" value="FACT_SPT16_M"/>
</dbReference>
<dbReference type="InterPro" id="IPR000994">
    <property type="entry name" value="Pept_M24"/>
</dbReference>
<dbReference type="InterPro" id="IPR011993">
    <property type="entry name" value="PH-like_dom_sf"/>
</dbReference>
<dbReference type="InterPro" id="IPR013719">
    <property type="entry name" value="RTT106/SPT16-like_middle_dom"/>
</dbReference>
<dbReference type="InterPro" id="IPR040258">
    <property type="entry name" value="Spt16"/>
</dbReference>
<dbReference type="InterPro" id="IPR033825">
    <property type="entry name" value="Spt16_M24"/>
</dbReference>
<dbReference type="PANTHER" id="PTHR13980">
    <property type="entry name" value="CDC68 RELATED"/>
    <property type="match status" value="1"/>
</dbReference>
<dbReference type="PANTHER" id="PTHR13980:SF15">
    <property type="entry name" value="FACT COMPLEX SUBUNIT SPT16"/>
    <property type="match status" value="1"/>
</dbReference>
<dbReference type="Pfam" id="PF14826">
    <property type="entry name" value="FACT-Spt16_Nlob"/>
    <property type="match status" value="1"/>
</dbReference>
<dbReference type="Pfam" id="PF00557">
    <property type="entry name" value="Peptidase_M24"/>
    <property type="match status" value="1"/>
</dbReference>
<dbReference type="Pfam" id="PF24824">
    <property type="entry name" value="PH_SPT16"/>
    <property type="match status" value="1"/>
</dbReference>
<dbReference type="Pfam" id="PF08512">
    <property type="entry name" value="Rttp106-like_middle"/>
    <property type="match status" value="1"/>
</dbReference>
<dbReference type="Pfam" id="PF08644">
    <property type="entry name" value="SPT16"/>
    <property type="match status" value="1"/>
</dbReference>
<dbReference type="Pfam" id="PF21091">
    <property type="entry name" value="SPT16_C"/>
    <property type="match status" value="1"/>
</dbReference>
<dbReference type="SMART" id="SM01285">
    <property type="entry name" value="FACT-Spt16_Nlob"/>
    <property type="match status" value="1"/>
</dbReference>
<dbReference type="SMART" id="SM01287">
    <property type="entry name" value="Rtt106"/>
    <property type="match status" value="1"/>
</dbReference>
<dbReference type="SMART" id="SM01286">
    <property type="entry name" value="SPT16"/>
    <property type="match status" value="1"/>
</dbReference>
<dbReference type="SUPFAM" id="SSF55920">
    <property type="entry name" value="Creatinase/aminopeptidase"/>
    <property type="match status" value="1"/>
</dbReference>
<gene>
    <name type="primary">SPT16</name>
    <name type="synonym">GTC102</name>
</gene>